<dbReference type="EC" id="1.14.18.9" evidence="2"/>
<dbReference type="EMBL" id="BC050163">
    <property type="protein sequence ID" value="AAH50163.1"/>
    <property type="molecule type" value="mRNA"/>
</dbReference>
<dbReference type="RefSeq" id="NP_998518.1">
    <property type="nucleotide sequence ID" value="NM_213353.1"/>
</dbReference>
<dbReference type="FunCoup" id="Q7ZW77">
    <property type="interactions" value="520"/>
</dbReference>
<dbReference type="STRING" id="7955.ENSDARP00000072739"/>
<dbReference type="PaxDb" id="7955-ENSDARP00000091590"/>
<dbReference type="GeneID" id="406662"/>
<dbReference type="KEGG" id="dre:406662"/>
<dbReference type="AGR" id="ZFIN:ZDB-GENE-040426-2670"/>
<dbReference type="CTD" id="6307"/>
<dbReference type="ZFIN" id="ZDB-GENE-040426-2670">
    <property type="gene designation" value="msmo1"/>
</dbReference>
<dbReference type="eggNOG" id="KOG0873">
    <property type="taxonomic scope" value="Eukaryota"/>
</dbReference>
<dbReference type="InParanoid" id="Q7ZW77"/>
<dbReference type="OrthoDB" id="1658724at2759"/>
<dbReference type="PhylomeDB" id="Q7ZW77"/>
<dbReference type="Reactome" id="R-DRE-191273">
    <property type="pathway name" value="Cholesterol biosynthesis"/>
</dbReference>
<dbReference type="UniPathway" id="UPA00770">
    <property type="reaction ID" value="UER00756"/>
</dbReference>
<dbReference type="PRO" id="PR:Q7ZW77"/>
<dbReference type="Proteomes" id="UP000000437">
    <property type="component" value="Alternate scaffold 1"/>
</dbReference>
<dbReference type="Proteomes" id="UP000000437">
    <property type="component" value="Chromosome 1"/>
</dbReference>
<dbReference type="GO" id="GO:0005789">
    <property type="term" value="C:endoplasmic reticulum membrane"/>
    <property type="evidence" value="ECO:0000318"/>
    <property type="project" value="GO_Central"/>
</dbReference>
<dbReference type="GO" id="GO:0000254">
    <property type="term" value="F:C-4 methylsterol oxidase activity"/>
    <property type="evidence" value="ECO:0000318"/>
    <property type="project" value="GO_Central"/>
</dbReference>
<dbReference type="GO" id="GO:0005506">
    <property type="term" value="F:iron ion binding"/>
    <property type="evidence" value="ECO:0007669"/>
    <property type="project" value="InterPro"/>
</dbReference>
<dbReference type="GO" id="GO:0006695">
    <property type="term" value="P:cholesterol biosynthetic process"/>
    <property type="evidence" value="ECO:0000315"/>
    <property type="project" value="ZFIN"/>
</dbReference>
<dbReference type="GO" id="GO:0032330">
    <property type="term" value="P:regulation of chondrocyte differentiation"/>
    <property type="evidence" value="ECO:0000315"/>
    <property type="project" value="ZFIN"/>
</dbReference>
<dbReference type="GO" id="GO:0016126">
    <property type="term" value="P:sterol biosynthetic process"/>
    <property type="evidence" value="ECO:0000318"/>
    <property type="project" value="GO_Central"/>
</dbReference>
<dbReference type="InterPro" id="IPR006694">
    <property type="entry name" value="Fatty_acid_hydroxylase"/>
</dbReference>
<dbReference type="InterPro" id="IPR050307">
    <property type="entry name" value="Sterol_Desaturase_Related"/>
</dbReference>
<dbReference type="PANTHER" id="PTHR11863">
    <property type="entry name" value="STEROL DESATURASE"/>
    <property type="match status" value="1"/>
</dbReference>
<dbReference type="Pfam" id="PF04116">
    <property type="entry name" value="FA_hydroxylase"/>
    <property type="match status" value="1"/>
</dbReference>
<reference key="1">
    <citation type="submission" date="2003-04" db="EMBL/GenBank/DDBJ databases">
        <authorList>
            <consortium name="NIH - Zebrafish Gene Collection (ZGC) project"/>
        </authorList>
    </citation>
    <scope>NUCLEOTIDE SEQUENCE [LARGE SCALE MRNA]</scope>
    <source>
        <strain>SJD</strain>
    </source>
</reference>
<keyword id="KW-0256">Endoplasmic reticulum</keyword>
<keyword id="KW-0408">Iron</keyword>
<keyword id="KW-0444">Lipid biosynthesis</keyword>
<keyword id="KW-0443">Lipid metabolism</keyword>
<keyword id="KW-0472">Membrane</keyword>
<keyword id="KW-0520">NAD</keyword>
<keyword id="KW-0560">Oxidoreductase</keyword>
<keyword id="KW-1185">Reference proteome</keyword>
<keyword id="KW-0752">Steroid biosynthesis</keyword>
<keyword id="KW-0753">Steroid metabolism</keyword>
<keyword id="KW-0756">Sterol biosynthesis</keyword>
<keyword id="KW-1207">Sterol metabolism</keyword>
<keyword id="KW-0812">Transmembrane</keyword>
<keyword id="KW-1133">Transmembrane helix</keyword>
<gene>
    <name type="primary">msmo1</name>
    <name type="synonym">sc4mol</name>
    <name type="ORF">zgc:56437</name>
</gene>
<sequence length="291" mass="34807">MEVNGTANILSSAFLAVEFVDSFLPQNPLQEPFKHAWNHMLQNYTKFQIATWGSLIVHELIYFLFCLPGFIFQFLPFMQKYKIQPDKPETWEKQWKCFKMLLFNHFCIQLPLICGTYYFTEFFSIPYDWDTMPRWPFLLAQCFGCAVIEDTWHYFLHRALHHRRIYKYIHKVHHDFTSPFGMQAEYAHPLETLILGAGFFIGTMVFCNHMILLWAWVTFRLLETIDVHSGYDIPLNPLHLIPFYAGARFHDFHHMNFVGNYGSTFTWWDRLFDTDSQFNKHYSHHKTAKSD</sequence>
<organism>
    <name type="scientific">Danio rerio</name>
    <name type="common">Zebrafish</name>
    <name type="synonym">Brachydanio rerio</name>
    <dbReference type="NCBI Taxonomy" id="7955"/>
    <lineage>
        <taxon>Eukaryota</taxon>
        <taxon>Metazoa</taxon>
        <taxon>Chordata</taxon>
        <taxon>Craniata</taxon>
        <taxon>Vertebrata</taxon>
        <taxon>Euteleostomi</taxon>
        <taxon>Actinopterygii</taxon>
        <taxon>Neopterygii</taxon>
        <taxon>Teleostei</taxon>
        <taxon>Ostariophysi</taxon>
        <taxon>Cypriniformes</taxon>
        <taxon>Danionidae</taxon>
        <taxon>Danioninae</taxon>
        <taxon>Danio</taxon>
    </lineage>
</organism>
<evidence type="ECO:0000250" key="1"/>
<evidence type="ECO:0000250" key="2">
    <source>
        <dbReference type="UniProtKB" id="P53045"/>
    </source>
</evidence>
<evidence type="ECO:0000255" key="3"/>
<evidence type="ECO:0000305" key="4"/>
<protein>
    <recommendedName>
        <fullName>Methylsterol monooxygenase 1</fullName>
        <ecNumber evidence="2">1.14.18.9</ecNumber>
    </recommendedName>
    <alternativeName>
        <fullName>C-4 methylsterol oxidase</fullName>
    </alternativeName>
</protein>
<name>MSMO1_DANRE</name>
<feature type="chain" id="PRO_0000249853" description="Methylsterol monooxygenase 1">
    <location>
        <begin position="1"/>
        <end position="291"/>
    </location>
</feature>
<feature type="transmembrane region" description="Helical" evidence="3">
    <location>
        <begin position="55"/>
        <end position="75"/>
    </location>
</feature>
<feature type="transmembrane region" description="Helical" evidence="3">
    <location>
        <begin position="100"/>
        <end position="120"/>
    </location>
</feature>
<feature type="transmembrane region" description="Helical" evidence="3">
    <location>
        <begin position="199"/>
        <end position="219"/>
    </location>
</feature>
<feature type="domain" description="Fatty acid hydroxylase" evidence="3">
    <location>
        <begin position="145"/>
        <end position="274"/>
    </location>
</feature>
<feature type="short sequence motif" description="Histidine box-1" evidence="1">
    <location>
        <begin position="157"/>
        <end position="161"/>
    </location>
</feature>
<feature type="short sequence motif" description="Histidine box-2" evidence="1">
    <location>
        <begin position="170"/>
        <end position="174"/>
    </location>
</feature>
<feature type="short sequence motif" description="Histidine box-3" evidence="1">
    <location>
        <begin position="249"/>
        <end position="255"/>
    </location>
</feature>
<comment type="function">
    <text evidence="2">Catalyzes the first step in the removal of the two C-4 methyl groups of 4,4-dimethylzymosterol.</text>
</comment>
<comment type="catalytic activity">
    <reaction evidence="2">
        <text>4,4-dimethyl-5alpha-cholest-7-en-3beta-ol + 6 Fe(II)-[cytochrome b5] + 3 O2 + 5 H(+) = 4alpha-carboxy-4beta-methyl-5alpha-cholest-7-ene-3beta-ol + 6 Fe(III)-[cytochrome b5] + 4 H2O</text>
        <dbReference type="Rhea" id="RHEA:55220"/>
        <dbReference type="Rhea" id="RHEA-COMP:10438"/>
        <dbReference type="Rhea" id="RHEA-COMP:10439"/>
        <dbReference type="ChEBI" id="CHEBI:15377"/>
        <dbReference type="ChEBI" id="CHEBI:15378"/>
        <dbReference type="ChEBI" id="CHEBI:15379"/>
        <dbReference type="ChEBI" id="CHEBI:16455"/>
        <dbReference type="ChEBI" id="CHEBI:29033"/>
        <dbReference type="ChEBI" id="CHEBI:29034"/>
        <dbReference type="ChEBI" id="CHEBI:58387"/>
        <dbReference type="EC" id="1.14.18.9"/>
    </reaction>
</comment>
<comment type="cofactor">
    <cofactor evidence="2">
        <name>Fe cation</name>
        <dbReference type="ChEBI" id="CHEBI:24875"/>
    </cofactor>
</comment>
<comment type="pathway">
    <text>Steroid biosynthesis; zymosterol biosynthesis; zymosterol from lanosterol: step 3/6.</text>
</comment>
<comment type="subcellular location">
    <subcellularLocation>
        <location evidence="4">Endoplasmic reticulum membrane</location>
        <topology evidence="4">Multi-pass membrane protein</topology>
    </subcellularLocation>
</comment>
<comment type="domain">
    <text>The histidine box domains may contain the active site and/or be involved in metal ion binding.</text>
</comment>
<comment type="similarity">
    <text evidence="4">Belongs to the sterol desaturase family.</text>
</comment>
<accession>Q7ZW77</accession>
<proteinExistence type="evidence at transcript level"/>